<comment type="function">
    <molecule>Capsid protein</molecule>
    <text evidence="2 3 4 11 12 13 15">Forms an icosahedral capsid with a T=4 symmetry composed of 240 copies of the capsid protein surrounded by a lipid membrane through which penetrate 80 spikes composed of trimers of E1-E2 heterodimers (By similarity). The capsid protein binds to the viral RNA genome at a site adjacent to a ribosome binding site for viral genome translation following genome release (By similarity). Possesses a protease activity that results in its autocatalytic cleavage from the nascent structural protein (By similarity). Following its self-cleavage, the capsid protein transiently associates with ribosomes, and within several minutes the protein binds to viral RNA and rapidly assembles into icosahedric core particles (By similarity). The resulting nucleocapsid eventually associates with the cytoplasmic domain of the spike glycoprotein E2 at the cell membrane, leading to budding and formation of mature virions (By similarity). In case of infection, new virions attach to target cells and after clathrin-mediated endocytosis their membrane fuses with the host endosomal membrane (By similarity). This leads to the release of the nucleocapsid into the cytoplasm, followed by an uncoating event necessary for the genomic RNA to become accessible (By similarity). The uncoating might be triggered by the interaction of capsid proteins with ribosomes (By similarity). Binding of ribosomes would release the genomic RNA since the same region is genomic RNA-binding and ribosome-binding (By similarity). Specifically inhibits interleukin-1 receptor-associated kinase 1/IRAK1-dependent signaling during viral entry, representing a means by which the alphaviruses may evade innate immune detection and activation prior to viral gene expression (By similarity). Inhibits host transcription (PubMed:17108023, PubMed:17913819). Forms a tetrameric complex with XPO1/CRM1 and the nuclear import receptor importin (PubMed:20147401, PubMed:29769351). This complex blocks the central channel of host nuclear pores thereby inhibiting the receptor-mediated nuclear transport and thus the host mRNA and rRNA transcription (PubMed:20147401, PubMed:29769351). The inhibition of transcription is linked to a cytopathic effect on the host cell (PubMed:17913819).</text>
</comment>
<comment type="function">
    <molecule>Assembly protein E3</molecule>
    <text evidence="2">Provides the signal sequence for the translocation of the precursor of protein E3/E2 to the host endoplasmic reticulum. Furin-cleaved E3 remains associated with spike glycoprotein E1 and mediates pH protection of the latter during the transport via the secretory pathway. After virion release from the host cell, the assembly protein E3 is gradually released in the extracellular space.</text>
</comment>
<comment type="function">
    <molecule>Spike glycoprotein E2</molecule>
    <text evidence="2 16 17">Plays a role in viral attachment to target host cell, by binding to the cell receptor LDLRAD3 (PubMed:34646020, PubMed:34646021). Synthesized as a p62 precursor which is processed by furin at the cell membrane just before virion budding, giving rise to E2-E1 heterodimer. The p62-E1 heterodimer is stable, whereas E2-E1 is unstable and dissociate at low pH. p62 is processed at the last step, presumably to avoid E1 fusion activation before its final export to cell surface. E2 C-terminus contains a transitory transmembrane that would be disrupted by palmitoylation, resulting in reorientation of the C-terminal tail from lumenal to cytoplasmic side. This step is critical since E2 C-terminus is involved in budding by interacting with capsid proteins. This release of E2 C-terminus in cytoplasm occurs lately in protein export, and precludes premature assembly of particles at the endoplasmic reticulum membrane (By similarity).</text>
</comment>
<comment type="function">
    <molecule>6K protein</molecule>
    <text evidence="2 3">Acts as a viroporin that participates in virus glycoprotein processing and transport to the plasma membrane, cell permeabilization and budding of viral particles (By similarity). Disrupts the calcium homeostasis of the cell, probably at the endoplasmic reticulum level (By similarity). This leads to cytoplasmic calcium elevation (By similarity). Because of its lipophilic properties, the 6K protein is postulated to influence the selection of lipids that interact with the transmembrane domains of the glycoproteins, which, in turn, affects the deformability of the bilayer required for the extreme curvature that occurs as budding proceeds. Present in low amount in virions, about 3% compared to viral glycoproteins (By similarity).</text>
</comment>
<comment type="function">
    <molecule>Spike glycoprotein E1</molecule>
    <text evidence="2 16 17">Class II viral fusion protein. Fusion activity is inactive as long as E1 is bound to E2 in mature virion. After virus attachment to cell receptor LDLRAD3 and endocytosis, acidification of the endosome would induce dissociation of E1/E2 heterodimer and concomitant trimerization of the E1 subunits (PubMed:34646020, PubMed:34646021). This E1 trimer is fusion active, and promotes release of viral nucleocapsid in cytoplasm after endosome and viral membrane fusion. Efficient fusion requires the presence of cholesterol and sphingolipid in the target membrane. Fusion is optimal at levels of about 1 molecule of cholesterol per 2 molecules of phospholipids, and is specific for sterols containing a 3-beta-hydroxyl group (By similarity).</text>
</comment>
<comment type="catalytic activity">
    <reaction evidence="3">
        <text>Autocatalytic release of the core protein from the N-terminus of the togavirus structural polyprotein by hydrolysis of a -Trp-|-Ser- bond.</text>
        <dbReference type="EC" id="3.4.21.90"/>
    </reaction>
</comment>
<comment type="subunit">
    <molecule>Capsid protein</molecule>
    <text evidence="3 6 7 13 15">Homodimer (By similarity). Homomultimer (By similarity). Interacts with host karyopherin KPNA4; this interaction allows the nuclear import of the viral capsid protein (By similarity). Interacts with spike glycoprotein E2 (By similarity). Interacts with host IRAK1; the interaction leads to inhibition of IRAK1-dependent signaling (By similarity). Part of a tetrameric complex composed of host CRM1, host importin alpha/beta dimer and the viral capsid; this complex blocks the receptor-mediated transport through the nuclear pore (PubMed:20147401). Interacts with host phosphatase PPP1CA; this interaction dephosphorylates the capsid protein, which increases its ability to bind to the viral genome (PubMed:29769351).</text>
</comment>
<comment type="subunit">
    <molecule>Precursor of protein E3/E2</molecule>
    <text evidence="2 3">The precursor of protein E3/E2 and E1 form a heterodimer shortly after synthesis (By similarity).</text>
</comment>
<comment type="subunit">
    <molecule>Spike glycoprotein E1</molecule>
    <text evidence="3 7 16 17">Interacts with spike glycoprotein E2 (By similarity). The precursor of protein E3/E2 and E1 form a heterodimer shortly after synthesis (By similarity). Processing of the precursor of protein E3/E2 into E2 and E3 results in a heterodimer of the spike glycoproteins E2 and E1 (By similarity). Spike at virion surface are constituted of three E2-E1 heterodimers (By similarity). After target cell attachment and endocytosis, E1 change conformation to form homotrimers (By similarity). Interacts with 6K protein (By similarity). Interacts with host LDLRAD3; this interaction mediates viral entry to the host cell (PubMed:34646020, PubMed:34646021).</text>
</comment>
<comment type="subunit">
    <molecule>Spike glycoprotein E2</molecule>
    <text evidence="3 16 17">Interacts with spike glycoprotein E1 (By similarity). Processing of the precursor of protein E3/E2 into E2 and E3 results in a heterodimer of the spike glycoproteins E2 and E1 (By similarity). Spike at virion surface are constituted of a trimer of E2-E1 heterodimers (By similarity). Interacts with 6K protein (By similarity). Interacts with host LDLRAD3; this interaction mediates viral entry to the host cell (PubMed:34646020, PubMed:34646021).</text>
</comment>
<comment type="subunit">
    <molecule>6K protein</molecule>
    <text evidence="3 5">Oligomer (By similarity). Interacts with spike glycoprotein E1. Interacts with spike glycoprotein E2 (By similarity).</text>
</comment>
<comment type="subcellular location">
    <molecule>Capsid protein</molecule>
    <subcellularLocation>
        <location evidence="3">Virion</location>
    </subcellularLocation>
    <subcellularLocation>
        <location evidence="11 15">Host cytoplasm</location>
    </subcellularLocation>
    <subcellularLocation>
        <location evidence="3">Host cell membrane</location>
    </subcellularLocation>
    <subcellularLocation>
        <location evidence="11 13">Host nucleus</location>
    </subcellularLocation>
</comment>
<comment type="subcellular location">
    <molecule>Spike glycoprotein E2</molecule>
    <subcellularLocation>
        <location evidence="7">Virion membrane</location>
        <topology evidence="8">Single-pass type I membrane protein</topology>
    </subcellularLocation>
    <subcellularLocation>
        <location evidence="3">Host cell membrane</location>
        <topology evidence="7">Single-pass type I membrane protein</topology>
    </subcellularLocation>
</comment>
<comment type="subcellular location">
    <molecule>6K protein</molecule>
    <subcellularLocation>
        <location evidence="3">Host cell membrane</location>
        <topology evidence="8">Multi-pass membrane protein</topology>
    </subcellularLocation>
    <subcellularLocation>
        <location evidence="3">Virion membrane</location>
        <topology evidence="8">Multi-pass membrane protein</topology>
    </subcellularLocation>
</comment>
<comment type="subcellular location">
    <molecule>Spike glycoprotein E1</molecule>
    <subcellularLocation>
        <location evidence="7">Virion membrane</location>
        <topology evidence="8">Single-pass type I membrane protein</topology>
    </subcellularLocation>
    <subcellularLocation>
        <location evidence="3 7">Host cell membrane</location>
        <topology evidence="8">Single-pass type I membrane protein</topology>
    </subcellularLocation>
</comment>
<comment type="domain">
    <text evidence="2">Structural polyprotein: As soon as the capsid protein has been autocleaved, an internal uncleaved signal peptide directs the remaining polyprotein to the endoplasmic reticulum.</text>
</comment>
<comment type="domain">
    <molecule>Capsid protein</molecule>
    <text evidence="3 13 14">The very N-terminus plays a role in the particle assembly process (PubMed:26656680). The N-terminus also contains a nuclear localization signal and a supraphysiological nuclear export signal (supraNES), which is an unusually strong NES that mediates host CRM1 binding in the absence of RanGTP and thus can bind CRM1, not only in the nucleus, but also in the cytoplasm (PubMed:20147401). The C-terminus functions as a protease during translation to cleave itself from the translating structural polyprotein (By similarity).</text>
</comment>
<comment type="PTM">
    <text evidence="2">Structural polyprotein: Specific enzymatic cleavages in vivo yield mature proteins. Capsid protein is auto-cleaved during polyprotein translation, unmasking a signal peptide at the N-terminus of the precursor of E3/E2. The remaining polyprotein is then targeted to the host endoplasmic reticulum, where host signal peptidase cleaves it into pE2, 6K and E1 proteins. pE2 is further processed to mature E3 and E2 by host furin in trans-Golgi vesicle.</text>
</comment>
<comment type="PTM">
    <molecule>Spike glycoprotein E2</molecule>
    <text evidence="2">Palmitoylated via thioester bonds. These palmitoylations may induce disruption of the C-terminus transmembrane. This would result in the reorientation of E2 C-terminus from lumenal to cytoplasmic side.</text>
</comment>
<comment type="PTM">
    <molecule>Capsid protein</molecule>
    <text evidence="15">Phosphorylated on serine and threonine residues.</text>
</comment>
<comment type="PTM">
    <molecule>Spike glycoprotein E1</molecule>
    <text evidence="2">N-glycosylated.</text>
</comment>
<comment type="PTM">
    <molecule>Spike glycoprotein E2</molecule>
    <text evidence="2">N-glycosylated.</text>
</comment>
<comment type="PTM">
    <molecule>Assembly protein E3</molecule>
    <text evidence="2">N-glycosylated.</text>
</comment>
<comment type="PTM">
    <molecule>6K protein</molecule>
    <text evidence="2">Palmitoylated via thioester bonds.</text>
</comment>
<comment type="miscellaneous">
    <text evidence="6">Structural polyprotein: Translated from a subgenomic RNA synthesized during togavirus replication.</text>
</comment>
<keyword id="KW-0002">3D-structure</keyword>
<keyword id="KW-0167">Capsid protein</keyword>
<keyword id="KW-1165">Clathrin-mediated endocytosis of virus by host</keyword>
<keyword id="KW-0165">Cleavage on pair of basic residues</keyword>
<keyword id="KW-1015">Disulfide bond</keyword>
<keyword id="KW-1262">Eukaryotic host gene expression shutoff by virus</keyword>
<keyword id="KW-1191">Eukaryotic host transcription shutoff by virus</keyword>
<keyword id="KW-1170">Fusion of virus membrane with host endosomal membrane</keyword>
<keyword id="KW-1168">Fusion of virus membrane with host membrane</keyword>
<keyword id="KW-0325">Glycoprotein</keyword>
<keyword id="KW-1032">Host cell membrane</keyword>
<keyword id="KW-1035">Host cytoplasm</keyword>
<keyword id="KW-1190">Host gene expression shutoff by virus</keyword>
<keyword id="KW-1043">Host membrane</keyword>
<keyword id="KW-1192">Host mRNA suppression by virus</keyword>
<keyword id="KW-1048">Host nucleus</keyword>
<keyword id="KW-0945">Host-virus interaction</keyword>
<keyword id="KW-0378">Hydrolase</keyword>
<keyword id="KW-1099">Inhibition of host mRNA nuclear export by virus</keyword>
<keyword id="KW-0449">Lipoprotein</keyword>
<keyword id="KW-0472">Membrane</keyword>
<keyword id="KW-0564">Palmitate</keyword>
<keyword id="KW-0597">Phosphoprotein</keyword>
<keyword id="KW-0645">Protease</keyword>
<keyword id="KW-0694">RNA-binding</keyword>
<keyword id="KW-0720">Serine protease</keyword>
<keyword id="KW-1144">T=4 icosahedral capsid protein</keyword>
<keyword id="KW-0812">Transmembrane</keyword>
<keyword id="KW-1133">Transmembrane helix</keyword>
<keyword id="KW-1161">Viral attachment to host cell</keyword>
<keyword id="KW-1234">Viral attachment to host entry receptor</keyword>
<keyword id="KW-0261">Viral envelope protein</keyword>
<keyword id="KW-1162">Viral penetration into host cytoplasm</keyword>
<keyword id="KW-0946">Virion</keyword>
<keyword id="KW-1164">Virus endocytosis by host</keyword>
<keyword id="KW-1160">Virus entry into host cell</keyword>
<organismHost>
    <name type="scientific">Bos taurus</name>
    <name type="common">Bovine</name>
    <dbReference type="NCBI Taxonomy" id="9913"/>
</organismHost>
<organismHost>
    <name type="scientific">Didelphis marsupialis</name>
    <name type="common">Southern opossum</name>
    <dbReference type="NCBI Taxonomy" id="9268"/>
</organismHost>
<organismHost>
    <name type="scientific">Equus asinus</name>
    <name type="common">Donkey</name>
    <name type="synonym">Equus africanus asinus</name>
    <dbReference type="NCBI Taxonomy" id="9793"/>
</organismHost>
<organismHost>
    <name type="scientific">Equus caballus</name>
    <name type="common">Horse</name>
    <dbReference type="NCBI Taxonomy" id="9796"/>
</organismHost>
<organismHost>
    <name type="scientific">Homo sapiens</name>
    <name type="common">Human</name>
    <dbReference type="NCBI Taxonomy" id="9606"/>
</organismHost>
<organismHost>
    <name type="scientific">Melanoconion</name>
    <dbReference type="NCBI Taxonomy" id="53535"/>
</organismHost>
<organismHost>
    <name type="scientific">Philander opossum</name>
    <name type="common">Gray four-eyed opossum</name>
    <dbReference type="NCBI Taxonomy" id="9272"/>
</organismHost>
<organismHost>
    <name type="scientific">Proechimys</name>
    <dbReference type="NCBI Taxonomy" id="10162"/>
</organismHost>
<organismHost>
    <name type="scientific">Sigmodon hispidus</name>
    <name type="common">Hispid cotton rat</name>
    <dbReference type="NCBI Taxonomy" id="42415"/>
</organismHost>
<evidence type="ECO:0000250" key="1"/>
<evidence type="ECO:0000250" key="2">
    <source>
        <dbReference type="UniProtKB" id="P03315"/>
    </source>
</evidence>
<evidence type="ECO:0000250" key="3">
    <source>
        <dbReference type="UniProtKB" id="P03316"/>
    </source>
</evidence>
<evidence type="ECO:0000250" key="4">
    <source>
        <dbReference type="UniProtKB" id="P27284"/>
    </source>
</evidence>
<evidence type="ECO:0000250" key="5">
    <source>
        <dbReference type="UniProtKB" id="Q5XXP3"/>
    </source>
</evidence>
<evidence type="ECO:0000250" key="6">
    <source>
        <dbReference type="UniProtKB" id="Q86925"/>
    </source>
</evidence>
<evidence type="ECO:0000250" key="7">
    <source>
        <dbReference type="UniProtKB" id="Q8JUX5"/>
    </source>
</evidence>
<evidence type="ECO:0000255" key="8"/>
<evidence type="ECO:0000255" key="9">
    <source>
        <dbReference type="PROSITE-ProRule" id="PRU01027"/>
    </source>
</evidence>
<evidence type="ECO:0000256" key="10">
    <source>
        <dbReference type="SAM" id="MobiDB-lite"/>
    </source>
</evidence>
<evidence type="ECO:0000269" key="11">
    <source>
    </source>
</evidence>
<evidence type="ECO:0000269" key="12">
    <source>
    </source>
</evidence>
<evidence type="ECO:0000269" key="13">
    <source>
    </source>
</evidence>
<evidence type="ECO:0000269" key="14">
    <source>
    </source>
</evidence>
<evidence type="ECO:0000269" key="15">
    <source>
    </source>
</evidence>
<evidence type="ECO:0000269" key="16">
    <source>
    </source>
</evidence>
<evidence type="ECO:0000269" key="17">
    <source>
    </source>
</evidence>
<dbReference type="EC" id="3.4.21.90" evidence="2"/>
<dbReference type="EMBL" id="M14937">
    <property type="protein sequence ID" value="AAA42997.1"/>
    <property type="molecule type" value="Genomic_RNA"/>
</dbReference>
<dbReference type="EMBL" id="J04332">
    <property type="protein sequence ID" value="AAB02519.1"/>
    <property type="molecule type" value="Genomic_RNA"/>
</dbReference>
<dbReference type="EMBL" id="L01443">
    <property type="protein sequence ID" value="AAB02517.1"/>
    <property type="molecule type" value="Genomic_RNA"/>
</dbReference>
<dbReference type="EMBL" id="L01442">
    <property type="protein sequence ID" value="AAC19322.1"/>
    <property type="molecule type" value="Genomic_RNA"/>
</dbReference>
<dbReference type="EMBL" id="AF004466">
    <property type="protein sequence ID" value="AAC36382.1"/>
    <property type="molecule type" value="Genomic_RNA"/>
</dbReference>
<dbReference type="PIR" id="B31467">
    <property type="entry name" value="VHWVVT"/>
</dbReference>
<dbReference type="PDB" id="3VE6">
    <property type="method" value="X-ray"/>
    <property type="resolution" value="2.83 A"/>
    <property type="chains" value="B=59-70"/>
</dbReference>
<dbReference type="PDBsum" id="3VE6"/>
<dbReference type="SMR" id="P09592"/>
<dbReference type="MEROPS" id="S03.001"/>
<dbReference type="iPTMnet" id="P09592"/>
<dbReference type="EvolutionaryTrace" id="P09592"/>
<dbReference type="Proteomes" id="UP000008659">
    <property type="component" value="Genome"/>
</dbReference>
<dbReference type="Proteomes" id="UP000127220">
    <property type="component" value="Segment"/>
</dbReference>
<dbReference type="Proteomes" id="UP000146452">
    <property type="component" value="Genome"/>
</dbReference>
<dbReference type="GO" id="GO:0030430">
    <property type="term" value="C:host cell cytoplasm"/>
    <property type="evidence" value="ECO:0007669"/>
    <property type="project" value="UniProtKB-SubCell"/>
</dbReference>
<dbReference type="GO" id="GO:0042025">
    <property type="term" value="C:host cell nucleus"/>
    <property type="evidence" value="ECO:0007669"/>
    <property type="project" value="UniProtKB-SubCell"/>
</dbReference>
<dbReference type="GO" id="GO:0020002">
    <property type="term" value="C:host cell plasma membrane"/>
    <property type="evidence" value="ECO:0007669"/>
    <property type="project" value="UniProtKB-SubCell"/>
</dbReference>
<dbReference type="GO" id="GO:0016020">
    <property type="term" value="C:membrane"/>
    <property type="evidence" value="ECO:0007669"/>
    <property type="project" value="UniProtKB-KW"/>
</dbReference>
<dbReference type="GO" id="GO:0039619">
    <property type="term" value="C:T=4 icosahedral viral capsid"/>
    <property type="evidence" value="ECO:0007669"/>
    <property type="project" value="UniProtKB-KW"/>
</dbReference>
<dbReference type="GO" id="GO:0019031">
    <property type="term" value="C:viral envelope"/>
    <property type="evidence" value="ECO:0007669"/>
    <property type="project" value="UniProtKB-KW"/>
</dbReference>
<dbReference type="GO" id="GO:0055036">
    <property type="term" value="C:virion membrane"/>
    <property type="evidence" value="ECO:0007669"/>
    <property type="project" value="UniProtKB-SubCell"/>
</dbReference>
<dbReference type="GO" id="GO:0003723">
    <property type="term" value="F:RNA binding"/>
    <property type="evidence" value="ECO:0007669"/>
    <property type="project" value="UniProtKB-KW"/>
</dbReference>
<dbReference type="GO" id="GO:0004252">
    <property type="term" value="F:serine-type endopeptidase activity"/>
    <property type="evidence" value="ECO:0007669"/>
    <property type="project" value="InterPro"/>
</dbReference>
<dbReference type="GO" id="GO:0005198">
    <property type="term" value="F:structural molecule activity"/>
    <property type="evidence" value="ECO:0007669"/>
    <property type="project" value="InterPro"/>
</dbReference>
<dbReference type="GO" id="GO:0075512">
    <property type="term" value="P:clathrin-dependent endocytosis of virus by host cell"/>
    <property type="evidence" value="ECO:0007669"/>
    <property type="project" value="UniProtKB-KW"/>
</dbReference>
<dbReference type="GO" id="GO:0039654">
    <property type="term" value="P:fusion of virus membrane with host endosome membrane"/>
    <property type="evidence" value="ECO:0007669"/>
    <property type="project" value="UniProtKB-KW"/>
</dbReference>
<dbReference type="GO" id="GO:0006508">
    <property type="term" value="P:proteolysis"/>
    <property type="evidence" value="ECO:0007669"/>
    <property type="project" value="UniProtKB-KW"/>
</dbReference>
<dbReference type="GO" id="GO:0039522">
    <property type="term" value="P:symbiont-mediated suppression of host mRNA export from nucleus"/>
    <property type="evidence" value="ECO:0007669"/>
    <property type="project" value="UniProtKB-KW"/>
</dbReference>
<dbReference type="GO" id="GO:0039722">
    <property type="term" value="P:symbiont-mediated suppression of host toll-like receptor signaling pathway"/>
    <property type="evidence" value="ECO:0000250"/>
    <property type="project" value="UniProtKB"/>
</dbReference>
<dbReference type="GO" id="GO:0019062">
    <property type="term" value="P:virion attachment to host cell"/>
    <property type="evidence" value="ECO:0007669"/>
    <property type="project" value="UniProtKB-KW"/>
</dbReference>
<dbReference type="FunFam" id="1.10.287.2230:FF:000001">
    <property type="entry name" value="Structural polyprotein"/>
    <property type="match status" value="1"/>
</dbReference>
<dbReference type="FunFam" id="2.40.10.10:FF:000075">
    <property type="entry name" value="Structural polyprotein"/>
    <property type="match status" value="1"/>
</dbReference>
<dbReference type="FunFam" id="2.40.10.10:FF:000076">
    <property type="entry name" value="Structural polyprotein"/>
    <property type="match status" value="1"/>
</dbReference>
<dbReference type="FunFam" id="2.60.40.350:FF:000002">
    <property type="entry name" value="Structural polyprotein"/>
    <property type="match status" value="1"/>
</dbReference>
<dbReference type="FunFam" id="2.60.98.10:FF:000002">
    <property type="entry name" value="Structural polyprotein"/>
    <property type="match status" value="1"/>
</dbReference>
<dbReference type="Gene3D" id="1.10.287.2230">
    <property type="match status" value="1"/>
</dbReference>
<dbReference type="Gene3D" id="2.60.40.350">
    <property type="match status" value="1"/>
</dbReference>
<dbReference type="Gene3D" id="2.60.40.3200">
    <property type="entry name" value="Alphavirus E2 glycoprotein, A domain"/>
    <property type="match status" value="1"/>
</dbReference>
<dbReference type="Gene3D" id="2.60.40.4310">
    <property type="entry name" value="Alphavirus E2 glycoprotein, domain B"/>
    <property type="match status" value="1"/>
</dbReference>
<dbReference type="Gene3D" id="2.60.40.2400">
    <property type="entry name" value="Alphavirus E2 glycoprotein, domain C"/>
    <property type="match status" value="1"/>
</dbReference>
<dbReference type="Gene3D" id="2.60.98.10">
    <property type="entry name" value="Tick-borne Encephalitis virus Glycoprotein, domain 1"/>
    <property type="match status" value="3"/>
</dbReference>
<dbReference type="Gene3D" id="2.40.10.10">
    <property type="entry name" value="Trypsin-like serine proteases"/>
    <property type="match status" value="2"/>
</dbReference>
<dbReference type="InterPro" id="IPR002548">
    <property type="entry name" value="Alpha_E1_glycop"/>
</dbReference>
<dbReference type="InterPro" id="IPR000936">
    <property type="entry name" value="Alpha_E2_glycop"/>
</dbReference>
<dbReference type="InterPro" id="IPR002533">
    <property type="entry name" value="Alpha_E3_glycop"/>
</dbReference>
<dbReference type="InterPro" id="IPR042304">
    <property type="entry name" value="Alphavir_E2_A"/>
</dbReference>
<dbReference type="InterPro" id="IPR042305">
    <property type="entry name" value="Alphavir_E2_B"/>
</dbReference>
<dbReference type="InterPro" id="IPR042306">
    <property type="entry name" value="Alphavir_E2_C"/>
</dbReference>
<dbReference type="InterPro" id="IPR000336">
    <property type="entry name" value="Flavivir/Alphavir_Ig-like_sf"/>
</dbReference>
<dbReference type="InterPro" id="IPR036253">
    <property type="entry name" value="Glycoprot_cen/dimer_sf"/>
</dbReference>
<dbReference type="InterPro" id="IPR038055">
    <property type="entry name" value="Glycoprot_E_dimer_dom"/>
</dbReference>
<dbReference type="InterPro" id="IPR014756">
    <property type="entry name" value="Ig_E-set"/>
</dbReference>
<dbReference type="InterPro" id="IPR009003">
    <property type="entry name" value="Peptidase_S1_PA"/>
</dbReference>
<dbReference type="InterPro" id="IPR043504">
    <property type="entry name" value="Peptidase_S1_PA_chymotrypsin"/>
</dbReference>
<dbReference type="InterPro" id="IPR000930">
    <property type="entry name" value="Peptidase_S3"/>
</dbReference>
<dbReference type="Pfam" id="PF01589">
    <property type="entry name" value="Alpha_E1_glycop"/>
    <property type="match status" value="1"/>
</dbReference>
<dbReference type="Pfam" id="PF00943">
    <property type="entry name" value="Alpha_E2_glycop"/>
    <property type="match status" value="1"/>
</dbReference>
<dbReference type="Pfam" id="PF01563">
    <property type="entry name" value="Alpha_E3_glycop"/>
    <property type="match status" value="1"/>
</dbReference>
<dbReference type="Pfam" id="PF00944">
    <property type="entry name" value="Peptidase_S3"/>
    <property type="match status" value="1"/>
</dbReference>
<dbReference type="PRINTS" id="PR00798">
    <property type="entry name" value="TOGAVIRIN"/>
</dbReference>
<dbReference type="SUPFAM" id="SSF81296">
    <property type="entry name" value="E set domains"/>
    <property type="match status" value="1"/>
</dbReference>
<dbReference type="SUPFAM" id="SSF50494">
    <property type="entry name" value="Trypsin-like serine proteases"/>
    <property type="match status" value="1"/>
</dbReference>
<dbReference type="SUPFAM" id="SSF56983">
    <property type="entry name" value="Viral glycoprotein, central and dimerisation domains"/>
    <property type="match status" value="1"/>
</dbReference>
<dbReference type="PROSITE" id="PS51690">
    <property type="entry name" value="ALPHAVIRUS_CP"/>
    <property type="match status" value="1"/>
</dbReference>
<proteinExistence type="evidence at protein level"/>
<sequence>MFPFQPMYPMQPMPYRNPFAAPRRPWFPRTDPFLAMQVQELTRSMANLTFKQRRDAPPEGPSAKKPKKEASQKQKGGGQGKKKKNQGKKKAKTGPPNPKAQNGNKKKTNKKPGKRQRMVMKLESDKTFPIMLEGKINGYACVVGGKLFRPMHVEGKIDNDVLAALKTKKASKYDLEYADVPQNMRADTFKYTHEKPQGYYSWHHGAVQYENGRFTVPKGVGAKGDSGRPILDNQGRVVAIVLGGVNEGSRTALSVVMWNEKGVTVKYTPENCEQWSLVTTMCLLANVTFPCAQPPICYDRKPAETLAMLSVNVDNPGYDELLEAAVKCPGRKRRSTEELFKEYKLTRPYMARCIRCAVGSCHSPIAIEAVKSDGHDGYVRLQTSSQYGLDSSGNLKGRTMRYDMHGTIKEIPLHQVSLHTSRPCHIVDGHGYFLLARCPAGDSITMEFKKDSVTHSCSVPYEVKFNPVGRELYTHPPEHGVEQACQVYAHDAQNRGAYVEMHLPGSEVDSSLVSLSGSSVTVTPPVGTSALVECECGGTKISETINKTKQFSQCTKKEQCRAYRLQNDKWVYNSDKLPKAAGATLKGKLHVPFLLADGKCTVPLAPEPMITFGFRSVSLKLHPKNPTYLTTRQLADEPHYTHELISEPAVRNFTVTEKGWEFVWGNHPPKRFWAQETAPGNPHGLPHEVITHYYHRYPMSTILGLSICAAIATVSVAASTWLFCRSRVACLTPYRLTPNARIPFCLAVLCCARTARAETTWESLDHLWNNNQQMFWIQLLIPLAALIVVTRLLRCVCCVVPFLVMAGAAAGAYEHATTMPSQAGISYNTIVNRAGYAPLPISITPTKIKLIPTVNLEYVTCHYKTGMDSPAIKCCGSQECTPTYRPDEQCKVFTGVYPFMWGGAYCFCDTENTQVSKAYVMKSDDCLADHAEAYKAHTASVQAFLNITVGEHSIVTTVYVNGETPVNFNGVKLTAGPLSTAWTPFDRKIVQYAGEIYNYDFPEYGAGQPGAFGDIQSRTVSSSDLYANTNLVLQRPKAGAIHVPYTQAPSGFEQWKKDKAPSLKFTAPFGCEIYTNPIRAENCAVGSIPLAFDIPDALFTRVSETPTLSAAECTLNECVYSSDFGGIATVKYSASKSGKCAVHVPSGTATLKEAAVELTEQGSATIHFSTANIHPEFRLQICTSYVTCKGDCHPPKDHIVTHPQYHAQTFTAAVSKTAWTWLTSLLGGSAVIIIIGLVLATIVAMYVLTNQKHN</sequence>
<name>POLS_EEVVT</name>
<protein>
    <recommendedName>
        <fullName>Structural polyprotein</fullName>
    </recommendedName>
    <alternativeName>
        <fullName>p130</fullName>
    </alternativeName>
    <component>
        <recommendedName>
            <fullName>Capsid protein</fullName>
            <ecNumber evidence="2">3.4.21.90</ecNumber>
        </recommendedName>
        <alternativeName>
            <fullName>Coat protein</fullName>
            <shortName>C</shortName>
        </alternativeName>
    </component>
    <component>
        <recommendedName>
            <fullName>Precursor of protein E3/E2</fullName>
        </recommendedName>
        <alternativeName>
            <fullName>p62</fullName>
        </alternativeName>
        <alternativeName>
            <fullName>pE2</fullName>
        </alternativeName>
    </component>
    <component>
        <recommendedName>
            <fullName>Assembly protein E3</fullName>
        </recommendedName>
    </component>
    <component>
        <recommendedName>
            <fullName>Spike glycoprotein E2</fullName>
        </recommendedName>
        <alternativeName>
            <fullName>E2 envelope glycoprotein</fullName>
        </alternativeName>
    </component>
    <component>
        <recommendedName>
            <fullName>6K protein</fullName>
        </recommendedName>
    </component>
    <component>
        <recommendedName>
            <fullName>Spike glycoprotein E1</fullName>
        </recommendedName>
        <alternativeName>
            <fullName>E1 envelope glycoprotein</fullName>
        </alternativeName>
    </component>
</protein>
<reference key="1">
    <citation type="journal article" date="1986" name="Virology">
        <title>Nucleotide sequence of the 26 S mRNA of the virulent Trinidad donkey strain of Venezuelan equine encephalitis virus and deduced sequence of the encoded structural proteins.</title>
        <authorList>
            <person name="Kinney R.M."/>
            <person name="Johnson B.J.B."/>
            <person name="Brown V.L."/>
            <person name="Trent D.W."/>
        </authorList>
    </citation>
    <scope>NUCLEOTIDE SEQUENCE [GENOMIC RNA]</scope>
</reference>
<reference key="2">
    <citation type="journal article" date="1989" name="Virology">
        <title>The full-length nucleotide sequences of the virulent Trinidad donkey strain of Venezuelan equine encephalitis virus and its attenuated vaccine derivative, strain TC-83.</title>
        <authorList>
            <person name="Kinney R.M."/>
            <person name="Johnson B.J.B."/>
            <person name="Welch J.B."/>
            <person name="Tsuchiya K.R."/>
            <person name="Trent D.W."/>
        </authorList>
    </citation>
    <scope>NUCLEOTIDE SEQUENCE [GENOMIC RNA]</scope>
</reference>
<reference key="3">
    <citation type="journal article" date="1997" name="J. Virol.">
        <title>Repeated emergence of epidemic/epizootic Venezuelan equine encephalitis from a single genotype of enzootic subtype ID virus.</title>
        <authorList>
            <person name="Powers A.M."/>
            <person name="Oberste M.S."/>
            <person name="Brault A.C."/>
            <person name="Rico-Hesse R."/>
            <person name="Schmura S.M."/>
            <person name="Smith J.F."/>
            <person name="Kang W."/>
            <person name="Sweeney W.P."/>
            <person name="Weaver S.C."/>
        </authorList>
    </citation>
    <scope>NUCLEOTIDE SEQUENCE [GENOMIC RNA]</scope>
    <source>
        <strain>Isolate CoAn5384</strain>
    </source>
</reference>
<reference key="4">
    <citation type="journal article" date="2007" name="J. Virol.">
        <title>The Old World and New World alphaviruses use different virus-specific proteins for induction of transcriptional shutoff.</title>
        <authorList>
            <person name="Garmashova N."/>
            <person name="Gorchakov R."/>
            <person name="Volkova E."/>
            <person name="Paessler S."/>
            <person name="Frolova E."/>
            <person name="Frolov I."/>
        </authorList>
    </citation>
    <scope>FUNCTION (CAPSID PROTEIN)</scope>
    <scope>SUBCELLULAR LOCATION (CAPSID PROTEIN)</scope>
</reference>
<reference key="5">
    <citation type="journal article" date="2007" name="J. Virol.">
        <title>Analysis of Venezuelan equine encephalitis virus capsid protein function in the inhibition of cellular transcription.</title>
        <authorList>
            <person name="Garmashova N."/>
            <person name="Atasheva S."/>
            <person name="Kang W."/>
            <person name="Weaver S.C."/>
            <person name="Frolova E."/>
            <person name="Frolov I."/>
        </authorList>
    </citation>
    <scope>FUNCTION (CAPSID PROTEIN)</scope>
    <scope>MUTAGENESIS OF LYS-51 AND GLN-52</scope>
</reference>
<reference key="6">
    <citation type="journal article" date="2010" name="J. Virol.">
        <title>Venezuelan equine encephalitis virus capsid protein forms a tetrameric complex with CRM1 and importin alpha/beta that obstructs nuclear pore complex function.</title>
        <authorList>
            <person name="Atasheva S."/>
            <person name="Fish A."/>
            <person name="Fornerod M."/>
            <person name="Frolova E.I."/>
        </authorList>
    </citation>
    <scope>FUNCTION (CAPSID PROTEIN)</scope>
    <scope>IDENTIFICATION IN COMPLEX WITH HOST CRM1 AND IMPORTIN ALPHA/BETA (CAPSID PROTEIN)</scope>
    <scope>NUCLEAR LOCALIZATION SIGNAL</scope>
    <scope>SUPRAPHYSIOLOGICAL NULEAR EXPORT SIGNAL</scope>
    <scope>MUTAGENESIS OF LEU-48; PHE-50; LYS-65 AND LYS-67</scope>
    <scope>SUBCELLULAR LOCATION (CAPSID PROTEIN)</scope>
    <scope>DOMAIN (CAPSID PROTEIN)</scope>
</reference>
<reference key="7">
    <citation type="journal article" date="2016" name="J. Virol.">
        <title>The SD1 Subdomain of Venezuelan Equine Encephalitis Virus Capsid Protein Plays a Critical Role in Nucleocapsid and Particle Assembly.</title>
        <authorList>
            <person name="Reynaud J.M."/>
            <person name="Lulla V."/>
            <person name="Kim D.Y."/>
            <person name="Frolova E.I."/>
            <person name="Frolov I."/>
        </authorList>
    </citation>
    <scope>DOMAIN (CAPSID PROTEIN)</scope>
</reference>
<reference key="8">
    <citation type="journal article" date="2017" name="Viruses">
        <title>Venezuelan Equine Encephalitis Virus Capsid-The Clever Caper.</title>
        <authorList>
            <person name="Lundberg L."/>
            <person name="Carey B."/>
            <person name="Kehn-Hall K."/>
        </authorList>
    </citation>
    <scope>REVIEW (CAPSID PROTEIN)</scope>
</reference>
<reference key="9">
    <citation type="journal article" date="2018" name="J. Virol.">
        <title>Protein phosphatase 1alpha interacts with Venezuelan equine encephalitis virus capsid protein and regulates viral replication through modulation of capsid phosphorylation.</title>
        <authorList>
            <person name="Carey B.D."/>
            <person name="Ammosova T."/>
            <person name="Pinkham C."/>
            <person name="Lin X."/>
            <person name="Zhou W."/>
            <person name="Liotta L.A."/>
            <person name="Nekhai S."/>
            <person name="Kehn-Hall K."/>
        </authorList>
    </citation>
    <scope>INTERACTION WITH HOST PPP1CA (CAPSID PROTEIN)</scope>
    <scope>PHOSPHORYLATION AT THR-93; THR-108; SER-124 AND THR-127 (CAPSID PROTEIN)</scope>
    <scope>SUBCELLULAR LOCATION (CAPSID PROTEIN)</scope>
    <source>
        <strain>TC-83</strain>
        <strain>Trinidad donkey</strain>
    </source>
</reference>
<reference key="10">
    <citation type="journal article" date="2021" name="Nature">
        <title>Structure of Venezuelan equine encephalitis virus in complex with the LDLRAD3 receptor.</title>
        <authorList>
            <person name="Basore K."/>
            <person name="Ma H."/>
            <person name="Kafai N.M."/>
            <person name="Mackin S."/>
            <person name="Kim A.S."/>
            <person name="Nelson C.A."/>
            <person name="Diamond M.S."/>
            <person name="Fremont D.H."/>
        </authorList>
    </citation>
    <scope>FUNCTION (SPIKE GLYCOPROTEIN E1)</scope>
    <scope>FUNCTION (SPIKE GLYCOPROTEIN E2)</scope>
    <scope>INTERACTION WITH HOST LDLRAD3 (SPIKE GLYCOPROTEIN E1)</scope>
    <scope>INTERACTION WITH HOST LDLRAD3 (SPIKE GLYCOPROTEIN E2)</scope>
</reference>
<reference key="11">
    <citation type="journal article" date="2021" name="Nature">
        <title>Structure of Venezuelan equine encephalitis virus with its receptor LDLRAD3.</title>
        <authorList>
            <person name="Ma B."/>
            <person name="Huang C."/>
            <person name="Ma J."/>
            <person name="Xiang Y."/>
            <person name="Zhang X."/>
        </authorList>
    </citation>
    <scope>FUNCTION (SPIKE GLYCOPROTEIN E1)</scope>
    <scope>FUNCTION (SPIKE GLYCOPROTEIN E2)</scope>
    <scope>INTERACTION WITH HOST LDLRAD3 (SPIKE GLYCOPROTEIN E1)</scope>
    <scope>INTERACTION WITH HOST LDLRAD3 (SPIKE GLYCOPROTEIN E2)</scope>
</reference>
<accession>P09592</accession>
<accession>Q66593</accession>
<accession>Q66595</accession>
<accession>Q88691</accession>
<accession>Q88692</accession>
<accession>Q88693</accession>
<accession>Q88694</accession>
<accession>Q88695</accession>
<feature type="chain" id="PRO_0000041276" description="Capsid protein">
    <location>
        <begin position="1"/>
        <end position="275"/>
    </location>
</feature>
<feature type="chain" id="PRO_0000234323" description="Precursor of protein E3/E2">
    <location>
        <begin position="276"/>
        <end position="757"/>
    </location>
</feature>
<feature type="chain" id="PRO_0000041277" description="Assembly protein E3">
    <location>
        <begin position="276"/>
        <end position="334"/>
    </location>
</feature>
<feature type="chain" id="PRO_0000041278" description="Spike glycoprotein E2">
    <location>
        <begin position="335"/>
        <end position="757"/>
    </location>
</feature>
<feature type="chain" id="PRO_0000041279" description="6K protein">
    <location>
        <begin position="758"/>
        <end position="812"/>
    </location>
</feature>
<feature type="chain" id="PRO_0000041280" description="Spike glycoprotein E1">
    <location>
        <begin position="813"/>
        <end position="1254"/>
    </location>
</feature>
<feature type="topological domain" description="Extracellular" evidence="8">
    <location>
        <begin position="276"/>
        <end position="701"/>
    </location>
</feature>
<feature type="transmembrane region" description="Helical" evidence="8">
    <location>
        <begin position="702"/>
        <end position="722"/>
    </location>
</feature>
<feature type="topological domain" description="Cytoplasmic" evidence="8">
    <location>
        <begin position="723"/>
        <end position="757"/>
    </location>
</feature>
<feature type="topological domain" description="Extracellular" evidence="8">
    <location>
        <begin position="758"/>
        <end position="772"/>
    </location>
</feature>
<feature type="transmembrane region" description="Helical" evidence="8">
    <location>
        <begin position="773"/>
        <end position="793"/>
    </location>
</feature>
<feature type="topological domain" description="Cytoplasmic" evidence="8">
    <location>
        <begin position="794"/>
        <end position="795"/>
    </location>
</feature>
<feature type="transmembrane region" description="Helical" evidence="8">
    <location>
        <begin position="796"/>
        <end position="816"/>
    </location>
</feature>
<feature type="topological domain" description="Extracellular" evidence="8">
    <location>
        <begin position="817"/>
        <end position="1224"/>
    </location>
</feature>
<feature type="transmembrane region" description="Helical" evidence="8">
    <location>
        <begin position="1225"/>
        <end position="1245"/>
    </location>
</feature>
<feature type="topological domain" description="Cytoplasmic" evidence="8">
    <location>
        <begin position="1246"/>
        <end position="1254"/>
    </location>
</feature>
<feature type="domain" description="Peptidase S3" evidence="9">
    <location>
        <begin position="126"/>
        <end position="275"/>
    </location>
</feature>
<feature type="region of interest" description="Necessary for nucleocapsid assembly and virus assembly" evidence="14">
    <location>
        <begin position="1"/>
        <end position="33"/>
    </location>
</feature>
<feature type="region of interest" description="Host transcription inhibition" evidence="12">
    <location>
        <begin position="33"/>
        <end position="68"/>
    </location>
</feature>
<feature type="region of interest" description="Disordered" evidence="10">
    <location>
        <begin position="45"/>
        <end position="119"/>
    </location>
</feature>
<feature type="region of interest" description="Binding to the viral RNA" evidence="4">
    <location>
        <begin position="91"/>
        <end position="127"/>
    </location>
</feature>
<feature type="region of interest" description="Ribosome-binding" evidence="4">
    <location>
        <begin position="112"/>
        <end position="126"/>
    </location>
</feature>
<feature type="region of interest" description="Functions as an uncleaved signal peptide for the precursor of protein E3/E2" evidence="2">
    <location>
        <begin position="276"/>
        <end position="287"/>
    </location>
</feature>
<feature type="region of interest" description="Transient transmembrane before p62-6K protein processing" evidence="8">
    <location>
        <begin position="730"/>
        <end position="750"/>
    </location>
</feature>
<feature type="region of interest" description="E1 fusion peptide loop" evidence="7">
    <location>
        <begin position="896"/>
        <end position="913"/>
    </location>
</feature>
<feature type="short sequence motif" description="Supraphysiological nuclear export signal" evidence="13">
    <location>
        <begin position="41"/>
        <end position="48"/>
    </location>
</feature>
<feature type="short sequence motif" description="Nuclear localization signal" evidence="13">
    <location>
        <begin position="64"/>
        <end position="68"/>
    </location>
</feature>
<feature type="compositionally biased region" description="Basic residues" evidence="10">
    <location>
        <begin position="80"/>
        <end position="92"/>
    </location>
</feature>
<feature type="compositionally biased region" description="Basic residues" evidence="10">
    <location>
        <begin position="104"/>
        <end position="118"/>
    </location>
</feature>
<feature type="active site" description="Charge relay system" evidence="9">
    <location>
        <position position="152"/>
    </location>
</feature>
<feature type="active site" description="Charge relay system" evidence="9">
    <location>
        <position position="174"/>
    </location>
</feature>
<feature type="active site" description="Charge relay system" evidence="9">
    <location>
        <position position="226"/>
    </location>
</feature>
<feature type="site" description="Involved in dimerization of the capsid protein" evidence="6">
    <location>
        <position position="200"/>
    </location>
</feature>
<feature type="site" description="Involved in dimerization of the capsid protein" evidence="6">
    <location>
        <position position="233"/>
    </location>
</feature>
<feature type="site" description="Cleavage; by autolysis" evidence="2">
    <location>
        <begin position="275"/>
        <end position="276"/>
    </location>
</feature>
<feature type="site" description="Cleavage; by host furin" evidence="2">
    <location>
        <begin position="334"/>
        <end position="335"/>
    </location>
</feature>
<feature type="site" description="Cleavage; by host signal peptidase" evidence="2">
    <location>
        <begin position="757"/>
        <end position="758"/>
    </location>
</feature>
<feature type="site" description="Cleavage; by host signal peptidase" evidence="2">
    <location>
        <begin position="812"/>
        <end position="813"/>
    </location>
</feature>
<feature type="modified residue" description="Phosphothreonine" evidence="15">
    <location>
        <position position="93"/>
    </location>
</feature>
<feature type="modified residue" description="Phosphothreonine" evidence="15">
    <location>
        <position position="108"/>
    </location>
</feature>
<feature type="modified residue" description="Phosphoserine" evidence="15">
    <location>
        <position position="124"/>
    </location>
</feature>
<feature type="modified residue" description="Phosphothreonine" evidence="15">
    <location>
        <position position="127"/>
    </location>
</feature>
<feature type="lipid moiety-binding region" description="S-palmitoyl cysteine; by host" evidence="3">
    <location>
        <position position="730"/>
    </location>
</feature>
<feature type="lipid moiety-binding region" description="S-palmitoyl cysteine; by host" evidence="3">
    <location>
        <position position="750"/>
    </location>
</feature>
<feature type="lipid moiety-binding region" description="S-palmitoyl cysteine; by host" evidence="3">
    <location>
        <position position="751"/>
    </location>
</feature>
<feature type="glycosylation site" description="N-linked (GlcNAc...) asparagine; by host" evidence="8">
    <location>
        <position position="286"/>
    </location>
</feature>
<feature type="glycosylation site" description="N-linked (GlcNAc...) asparagine; by host" evidence="8">
    <location>
        <position position="546"/>
    </location>
</feature>
<feature type="glycosylation site" description="N-linked (GlcNAc...) asparagine; by host" evidence="8">
    <location>
        <position position="652"/>
    </location>
</feature>
<feature type="glycosylation site" description="N-linked (GlcNAc...) asparagine; by host" evidence="8">
    <location>
        <position position="946"/>
    </location>
</feature>
<feature type="disulfide bond" evidence="1">
    <location>
        <begin position="861"/>
        <end position="926"/>
    </location>
</feature>
<feature type="disulfide bond" evidence="1">
    <location>
        <begin position="874"/>
        <end position="906"/>
    </location>
</feature>
<feature type="disulfide bond" evidence="1">
    <location>
        <begin position="875"/>
        <end position="908"/>
    </location>
</feature>
<feature type="disulfide bond" evidence="1">
    <location>
        <begin position="880"/>
        <end position="890"/>
    </location>
</feature>
<feature type="disulfide bond" evidence="1">
    <location>
        <begin position="1071"/>
        <end position="1083"/>
    </location>
</feature>
<feature type="disulfide bond" evidence="1">
    <location>
        <begin position="1113"/>
        <end position="1188"/>
    </location>
</feature>
<feature type="disulfide bond" evidence="1">
    <location>
        <begin position="1118"/>
        <end position="1192"/>
    </location>
</feature>
<feature type="disulfide bond" evidence="1">
    <location>
        <begin position="1140"/>
        <end position="1182"/>
    </location>
</feature>
<feature type="sequence variant" description="In strain: Isolate TC-83.">
    <original>K</original>
    <variation>N</variation>
    <location>
        <position position="341"/>
    </location>
</feature>
<feature type="sequence variant" description="In strain: Isolate TC-83.">
    <original>H</original>
    <variation>Y</variation>
    <location>
        <position position="419"/>
    </location>
</feature>
<feature type="sequence variant" description="In strain: Isolate TC-83.">
    <original>T</original>
    <variation>R</variation>
    <location>
        <position position="454"/>
    </location>
</feature>
<feature type="sequence variant" description="In strain: Isolate TC-83.">
    <original>V</original>
    <variation>D</variation>
    <location>
        <position position="526"/>
    </location>
</feature>
<feature type="sequence variant" description="In strain: Isolate TC-83.">
    <original>T</original>
    <variation>I</variation>
    <location>
        <position position="630"/>
    </location>
</feature>
<feature type="sequence variant" description="In strain: Isolate CoAn5384 and Isolate TC-83.">
    <original>A</original>
    <variation>GA</variation>
    <location>
        <position position="810"/>
    </location>
</feature>
<feature type="sequence variant">
    <original>G</original>
    <variation>P</variation>
    <location>
        <position position="811"/>
    </location>
</feature>
<feature type="sequence variant" description="In strain: Isolate TC-83.">
    <original>L</original>
    <variation>I</variation>
    <location>
        <position position="973"/>
    </location>
</feature>
<feature type="mutagenesis site" description="Complete loss of capsid protein nuclear export; when associated with A-50." evidence="13">
    <original>L</original>
    <variation>A</variation>
    <location>
        <position position="48"/>
    </location>
</feature>
<feature type="mutagenesis site" description="Complete loss of capsid protein nuclear export; when associated with A-48." evidence="13">
    <original>F</original>
    <variation>A</variation>
    <location>
        <position position="50"/>
    </location>
</feature>
<feature type="mutagenesis site" description="Non-cytopathic, incapable of inhibiting host transcription." evidence="12">
    <original>K</original>
    <variation>E</variation>
    <location>
        <position position="51"/>
    </location>
</feature>
<feature type="mutagenesis site" description="Non-cytopathic, incapable of inhibiting host transcription." evidence="12">
    <original>Q</original>
    <variation>P</variation>
    <location>
        <position position="52"/>
    </location>
</feature>
<feature type="mutagenesis site" description="Complete loss of capsid protein nuclear localization; when associated with A-67." evidence="13">
    <original>K</original>
    <variation>A</variation>
    <location>
        <position position="65"/>
    </location>
</feature>
<feature type="mutagenesis site" description="Complete loss of capsid protein nuclear localization; when associated with A-65." evidence="13">
    <original>K</original>
    <variation>A</variation>
    <location>
        <position position="67"/>
    </location>
</feature>
<organism>
    <name type="scientific">Venezuelan equine encephalitis virus (strain Trinidad donkey)</name>
    <name type="common">VEEV</name>
    <dbReference type="NCBI Taxonomy" id="11038"/>
    <lineage>
        <taxon>Viruses</taxon>
        <taxon>Riboviria</taxon>
        <taxon>Orthornavirae</taxon>
        <taxon>Kitrinoviricota</taxon>
        <taxon>Alsuviricetes</taxon>
        <taxon>Martellivirales</taxon>
        <taxon>Togaviridae</taxon>
        <taxon>Alphavirus</taxon>
        <taxon>Venezuelan equine encephalitis virus</taxon>
    </lineage>
</organism>